<name>IGAA_SALTS</name>
<comment type="function">
    <text evidence="3">Involved in negative control of bacterial proliferation within fibroblasts.</text>
</comment>
<comment type="subcellular location">
    <subcellularLocation>
        <location evidence="1">Cell inner membrane</location>
        <topology evidence="1">Multi-pass membrane protein</topology>
    </subcellularLocation>
</comment>
<comment type="similarity">
    <text evidence="4">Belongs to the IgaA family.</text>
</comment>
<evidence type="ECO:0000250" key="1"/>
<evidence type="ECO:0000255" key="2"/>
<evidence type="ECO:0000269" key="3">
    <source>
    </source>
</evidence>
<evidence type="ECO:0000305" key="4"/>
<keyword id="KW-0997">Cell inner membrane</keyword>
<keyword id="KW-1003">Cell membrane</keyword>
<keyword id="KW-0341">Growth regulation</keyword>
<keyword id="KW-0472">Membrane</keyword>
<keyword id="KW-0812">Transmembrane</keyword>
<keyword id="KW-1133">Transmembrane helix</keyword>
<keyword id="KW-0843">Virulence</keyword>
<organism>
    <name type="scientific">Salmonella typhimurium (strain SL1344)</name>
    <dbReference type="NCBI Taxonomy" id="216597"/>
    <lineage>
        <taxon>Bacteria</taxon>
        <taxon>Pseudomonadati</taxon>
        <taxon>Pseudomonadota</taxon>
        <taxon>Gammaproteobacteria</taxon>
        <taxon>Enterobacterales</taxon>
        <taxon>Enterobacteriaceae</taxon>
        <taxon>Salmonella</taxon>
    </lineage>
</organism>
<gene>
    <name type="primary">igaA</name>
    <name type="ordered locus">SL1344_3462</name>
</gene>
<accession>E1WIS2</accession>
<accession>Q9ACP0</accession>
<reference key="1">
    <citation type="journal article" date="2001" name="Infect. Immun.">
        <title>Salmonella enterica serovar Typhimurium response involved in attenuation of pathogen intracellular proliferation.</title>
        <authorList>
            <person name="Cano D.A."/>
            <person name="Martinez-Moya M."/>
            <person name="Pucciarelli M.G."/>
            <person name="Groisman E.A."/>
            <person name="Casadesus J."/>
            <person name="Garcia-del Portillo F."/>
        </authorList>
    </citation>
    <scope>NUCLEOTIDE SEQUENCE [GENOMIC DNA]</scope>
    <scope>FUNCTION</scope>
    <scope>MUTAGENESIS OF ARG-188</scope>
    <source>
        <strain>SL1344</strain>
    </source>
</reference>
<reference key="2">
    <citation type="journal article" date="2012" name="Proc. Natl. Acad. Sci. U.S.A.">
        <title>The transcriptional landscape and small RNAs of Salmonella enterica serovar Typhimurium.</title>
        <authorList>
            <person name="Kroger C."/>
            <person name="Dillon S.C."/>
            <person name="Cameron A.D."/>
            <person name="Papenfort K."/>
            <person name="Sivasankaran S.K."/>
            <person name="Hokamp K."/>
            <person name="Chao Y."/>
            <person name="Sittka A."/>
            <person name="Hebrard M."/>
            <person name="Handler K."/>
            <person name="Colgan A."/>
            <person name="Leekitcharoenphon P."/>
            <person name="Langridge G.C."/>
            <person name="Lohan A.J."/>
            <person name="Loftus B."/>
            <person name="Lucchini S."/>
            <person name="Ussery D.W."/>
            <person name="Dorman C.J."/>
            <person name="Thomson N.R."/>
            <person name="Vogel J."/>
            <person name="Hinton J.C."/>
        </authorList>
    </citation>
    <scope>NUCLEOTIDE SEQUENCE [LARGE SCALE GENOMIC DNA]</scope>
    <source>
        <strain>SL1344</strain>
    </source>
</reference>
<feature type="chain" id="PRO_0000405424" description="Intracellular growth attenuator protein IgaA">
    <location>
        <begin position="1"/>
        <end position="710"/>
    </location>
</feature>
<feature type="topological domain" description="Periplasmic" evidence="2">
    <location>
        <position position="1"/>
    </location>
</feature>
<feature type="transmembrane region" description="Helical" evidence="2">
    <location>
        <begin position="2"/>
        <end position="22"/>
    </location>
</feature>
<feature type="topological domain" description="Cytoplasmic" evidence="2">
    <location>
        <begin position="23"/>
        <end position="204"/>
    </location>
</feature>
<feature type="transmembrane region" description="Helical" evidence="2">
    <location>
        <begin position="205"/>
        <end position="225"/>
    </location>
</feature>
<feature type="transmembrane region" description="Helical" evidence="2">
    <location>
        <begin position="226"/>
        <end position="246"/>
    </location>
</feature>
<feature type="topological domain" description="Cytoplasmic" evidence="2">
    <location>
        <begin position="247"/>
        <end position="339"/>
    </location>
</feature>
<feature type="transmembrane region" description="Helical" evidence="2">
    <location>
        <begin position="340"/>
        <end position="360"/>
    </location>
</feature>
<feature type="topological domain" description="Periplasmic" evidence="2">
    <location>
        <begin position="361"/>
        <end position="656"/>
    </location>
</feature>
<feature type="transmembrane region" description="Helical" evidence="2">
    <location>
        <begin position="657"/>
        <end position="677"/>
    </location>
</feature>
<feature type="topological domain" description="Cytoplasmic" evidence="2">
    <location>
        <begin position="678"/>
        <end position="710"/>
    </location>
</feature>
<feature type="mutagenesis site" description="Increased ability to proliferate within fibroblasts." evidence="3">
    <original>R</original>
    <variation>H</variation>
    <location>
        <position position="188"/>
    </location>
</feature>
<proteinExistence type="evidence at protein level"/>
<sequence>MSTILIFIAALLACSLLAIWRFRVKSRRGSLPWISAFQDAQTRKLLPEERSAVENYLDNLSQIQQVPGPTGASAAPISLTLNAESNSVVILTHSITRYGITTDDPNKWRYYLDSVEVHLPPFWEQYINDENNVELILTDTLPLVISLNGHTLQEYMQESRGYALQNTASTQASIRGEESEQIELLNIRQETHEEYALSRPAGLREALLIVASFLLFFFCLITPDVFVPWMIGGAILLLAAGLWGLFAPPSKSALREIHCLRGTPRRWGLFGENNQEQINNISLGIIDLIYPAHWQPYITQDLGQQTDIDIYLDRHVARQGRFLSLHDEVKNFPLQHWLRSTVIAIGSLLVLFMLLFWIPLDMPIKFTLSWMKGAQTIEATTVKQLEKAGVRVGDTLHLSGKGMCNIHSGATWSGQSNSPFMPFDCSQIIWNDAPALPLPESDLVNKAMALSQAVNRQLHPKPEDDSRVSASLRSAIQKSGMVLLDDFGDIVLKTADLCAAEDECVRLKNALVNLGNSKDWNALVKRANAGKLDGVNVLLRPVSAESLENLVTTSTAPFISRETARAAQSLNSPAPGGFLIASDEGSELVDQTWPSTPLYDYPAQEQWSAFQRLAQTLMQTPFSAEGIVTSVYTDANGTQHISLHRIPDKSGWWRYLGTTLLMLAMIVSAVYNGIQAFRRYQRHRTRMADIQEYYESCLNPRLTVSPENLI</sequence>
<protein>
    <recommendedName>
        <fullName>Intracellular growth attenuator protein IgaA</fullName>
    </recommendedName>
</protein>
<dbReference type="EMBL" id="AJ301649">
    <property type="protein sequence ID" value="CAC37392.1"/>
    <property type="molecule type" value="Genomic_DNA"/>
</dbReference>
<dbReference type="EMBL" id="FQ312003">
    <property type="protein sequence ID" value="CBW19557.1"/>
    <property type="molecule type" value="Genomic_DNA"/>
</dbReference>
<dbReference type="RefSeq" id="WP_000104094.1">
    <property type="nucleotide sequence ID" value="NZ_QASL01000006.1"/>
</dbReference>
<dbReference type="SMR" id="E1WIS2"/>
<dbReference type="KEGG" id="sey:SL1344_3462"/>
<dbReference type="PATRIC" id="fig|216597.6.peg.3854"/>
<dbReference type="HOGENOM" id="CLU_014723_0_0_6"/>
<dbReference type="BioCyc" id="SENT216597:SL1344_RS18035-MONOMER"/>
<dbReference type="Proteomes" id="UP000008962">
    <property type="component" value="Chromosome"/>
</dbReference>
<dbReference type="GO" id="GO:0005886">
    <property type="term" value="C:plasma membrane"/>
    <property type="evidence" value="ECO:0007669"/>
    <property type="project" value="UniProtKB-SubCell"/>
</dbReference>
<dbReference type="InterPro" id="IPR010771">
    <property type="entry name" value="IgaA"/>
</dbReference>
<dbReference type="Pfam" id="PF07095">
    <property type="entry name" value="IgaA"/>
    <property type="match status" value="1"/>
</dbReference>